<dbReference type="EC" id="2.4.1.-"/>
<dbReference type="EMBL" id="CP017624">
    <property type="protein sequence ID" value="AOW27202.1"/>
    <property type="molecule type" value="Genomic_DNA"/>
</dbReference>
<dbReference type="RefSeq" id="XP_722514.1">
    <property type="nucleotide sequence ID" value="XM_717421.1"/>
</dbReference>
<dbReference type="SMR" id="Q5ALW2"/>
<dbReference type="BioGRID" id="1218875">
    <property type="interactions" value="1"/>
</dbReference>
<dbReference type="STRING" id="237561.Q5ALW2"/>
<dbReference type="CAZy" id="GT91">
    <property type="family name" value="Glycosyltransferase Family 91"/>
</dbReference>
<dbReference type="GlyCosmos" id="Q5ALW2">
    <property type="glycosylation" value="3 sites, No reported glycans"/>
</dbReference>
<dbReference type="PeptideAtlas" id="Q5ALW2"/>
<dbReference type="EnsemblFungi" id="C2_01560W_A-T">
    <property type="protein sequence ID" value="C2_01560W_A-T-p1"/>
    <property type="gene ID" value="C2_01560W_A"/>
</dbReference>
<dbReference type="GeneID" id="3635781"/>
<dbReference type="KEGG" id="cal:CAALFM_C201560WA"/>
<dbReference type="CGD" id="CAL0000182482">
    <property type="gene designation" value="BMT5"/>
</dbReference>
<dbReference type="VEuPathDB" id="FungiDB:C2_01560W_A"/>
<dbReference type="eggNOG" id="ENOG502QTZG">
    <property type="taxonomic scope" value="Eukaryota"/>
</dbReference>
<dbReference type="HOGENOM" id="CLU_013841_1_1_1"/>
<dbReference type="InParanoid" id="Q5ALW2"/>
<dbReference type="OMA" id="MAWIWRT"/>
<dbReference type="OrthoDB" id="3631276at2759"/>
<dbReference type="PRO" id="PR:Q5ALW2"/>
<dbReference type="Proteomes" id="UP000000559">
    <property type="component" value="Chromosome 2"/>
</dbReference>
<dbReference type="GO" id="GO:0016020">
    <property type="term" value="C:membrane"/>
    <property type="evidence" value="ECO:0007669"/>
    <property type="project" value="UniProtKB-SubCell"/>
</dbReference>
<dbReference type="GO" id="GO:0000030">
    <property type="term" value="F:mannosyltransferase activity"/>
    <property type="evidence" value="ECO:0007669"/>
    <property type="project" value="InterPro"/>
</dbReference>
<dbReference type="GO" id="GO:0071555">
    <property type="term" value="P:cell wall organization"/>
    <property type="evidence" value="ECO:0007669"/>
    <property type="project" value="UniProtKB-KW"/>
</dbReference>
<dbReference type="GO" id="GO:0006688">
    <property type="term" value="P:glycosphingolipid biosynthetic process"/>
    <property type="evidence" value="ECO:0000315"/>
    <property type="project" value="CGD"/>
</dbReference>
<dbReference type="InterPro" id="IPR021988">
    <property type="entry name" value="BMT1"/>
</dbReference>
<dbReference type="Pfam" id="PF12141">
    <property type="entry name" value="BMT"/>
    <property type="match status" value="1"/>
</dbReference>
<keyword id="KW-0961">Cell wall biogenesis/degradation</keyword>
<keyword id="KW-0325">Glycoprotein</keyword>
<keyword id="KW-0328">Glycosyltransferase</keyword>
<keyword id="KW-0472">Membrane</keyword>
<keyword id="KW-1185">Reference proteome</keyword>
<keyword id="KW-0735">Signal-anchor</keyword>
<keyword id="KW-0808">Transferase</keyword>
<keyword id="KW-0812">Transmembrane</keyword>
<keyword id="KW-1133">Transmembrane helix</keyword>
<comment type="function">
    <text evidence="3">Beta-mannosyltransferase involved in cell wall biosynthesis. Required for beta-1,2-mannose transfer on phospholipomannan.</text>
</comment>
<comment type="subcellular location">
    <subcellularLocation>
        <location evidence="4">Membrane</location>
        <topology evidence="4">Single-pass type II membrane protein</topology>
    </subcellularLocation>
</comment>
<comment type="induction">
    <text evidence="2">Expression is induced in biofilm.</text>
</comment>
<comment type="similarity">
    <text evidence="4">Belongs to the BMT family.</text>
</comment>
<accession>Q5ALW2</accession>
<accession>A0A1D8PGF2</accession>
<sequence length="612" mass="70896">MVQKQYRFAPKSIFTFVFLCFVAIVVIISTSSLVQVEESLDPIEVSDEIKKHDRKVVIFPSNFQSANNKLADFLTEAFGQRLNKGDIVYKNRDTYELPQTVYTWNTIDLFQSIGEKDNLKCEKIPLNFEISKIYNKNADLYKILRDFKNENSFYYKEVSVFFPDLGKQLRERTIEKHWFQLIGSSVWLEQYGVHLMISRVIYTKTGNKVQPVISLSYVQAFDRNWTELKNVTLVVPDSGKAKFKTVSYPSFIPIPVYHNVNQQRGKFYGVEDPRIMLVKNKEGYEEPLIVYNSFNRSPPNANYLEEIKNLVKLDTYRSIFMAWIWRTQLGKSNVGSSLPDLATTDDHKYVKVKELSLPNKKRPKTEKNWTPFVIYEDQKKQGYDSHLYFIYSFQDLSILKCSLWDAGNCIWEYRMNNKKTKISELRGGTELMNVNQLLDKYNFAGLETVKDQFKGKEVWISFARAALSKCGCGSKMYRPNFTVLVKQGGRFQLSFVSSYMDFGVPILPWAKGKGLCNGKNLLIPNGISNWVLAKDEGGGFQDYMTLSLSRSDSTVDIIHMKGILKSILSEYLLQTNRDVLNNNAIHCALLESESYCKSYAENYRAHLKRWQN</sequence>
<name>BMT5_CANAL</name>
<proteinExistence type="evidence at transcript level"/>
<reference key="1">
    <citation type="journal article" date="2004" name="Proc. Natl. Acad. Sci. U.S.A.">
        <title>The diploid genome sequence of Candida albicans.</title>
        <authorList>
            <person name="Jones T."/>
            <person name="Federspiel N.A."/>
            <person name="Chibana H."/>
            <person name="Dungan J."/>
            <person name="Kalman S."/>
            <person name="Magee B.B."/>
            <person name="Newport G."/>
            <person name="Thorstenson Y.R."/>
            <person name="Agabian N."/>
            <person name="Magee P.T."/>
            <person name="Davis R.W."/>
            <person name="Scherer S."/>
        </authorList>
    </citation>
    <scope>NUCLEOTIDE SEQUENCE [LARGE SCALE GENOMIC DNA]</scope>
    <source>
        <strain>SC5314 / ATCC MYA-2876</strain>
    </source>
</reference>
<reference key="2">
    <citation type="journal article" date="2007" name="Genome Biol.">
        <title>Assembly of the Candida albicans genome into sixteen supercontigs aligned on the eight chromosomes.</title>
        <authorList>
            <person name="van het Hoog M."/>
            <person name="Rast T.J."/>
            <person name="Martchenko M."/>
            <person name="Grindle S."/>
            <person name="Dignard D."/>
            <person name="Hogues H."/>
            <person name="Cuomo C."/>
            <person name="Berriman M."/>
            <person name="Scherer S."/>
            <person name="Magee B.B."/>
            <person name="Whiteway M."/>
            <person name="Chibana H."/>
            <person name="Nantel A."/>
            <person name="Magee P.T."/>
        </authorList>
    </citation>
    <scope>GENOME REANNOTATION</scope>
    <source>
        <strain>SC5314 / ATCC MYA-2876</strain>
    </source>
</reference>
<reference key="3">
    <citation type="journal article" date="2013" name="Genome Biol.">
        <title>Assembly of a phased diploid Candida albicans genome facilitates allele-specific measurements and provides a simple model for repeat and indel structure.</title>
        <authorList>
            <person name="Muzzey D."/>
            <person name="Schwartz K."/>
            <person name="Weissman J.S."/>
            <person name="Sherlock G."/>
        </authorList>
    </citation>
    <scope>NUCLEOTIDE SEQUENCE [LARGE SCALE GENOMIC DNA]</scope>
    <scope>GENOME REANNOTATION</scope>
    <source>
        <strain>SC5314 / ATCC MYA-2876</strain>
    </source>
</reference>
<reference key="4">
    <citation type="journal article" date="2008" name="J. Biol. Chem.">
        <title>Identification of a new family of genes involved in beta-1,2-mannosylation of glycans in Pichia pastoris and Candida albicans.</title>
        <authorList>
            <person name="Mille C."/>
            <person name="Bobrowicz P."/>
            <person name="Trinel P.A."/>
            <person name="Li H."/>
            <person name="Maes E."/>
            <person name="Guerardel Y."/>
            <person name="Fradin C."/>
            <person name="Martinez-Esparza M."/>
            <person name="Davidson R.C."/>
            <person name="Janbon G."/>
            <person name="Poulain D."/>
            <person name="Wildt S."/>
        </authorList>
    </citation>
    <scope>IDENTIFICATION</scope>
</reference>
<reference key="5">
    <citation type="journal article" date="2012" name="Cell">
        <title>A recently evolved transcriptional network controls biofilm development in Candida albicans.</title>
        <authorList>
            <person name="Nobile C.J."/>
            <person name="Fox E.P."/>
            <person name="Nett J.E."/>
            <person name="Sorrells T.R."/>
            <person name="Mitrovich Q.M."/>
            <person name="Hernday A.D."/>
            <person name="Tuch B.B."/>
            <person name="Andes D.R."/>
            <person name="Johnson A.D."/>
        </authorList>
    </citation>
    <scope>INDUCTION</scope>
</reference>
<reference key="6">
    <citation type="journal article" date="2012" name="Glycobiology">
        <title>Members 5 and 6 of the Candida albicans BMT family encode enzymes acting specifically on beta-mannosylation of the phospholipomannan cell-wall glycosphingolipid.</title>
        <authorList>
            <person name="Mille C."/>
            <person name="Fradin C."/>
            <person name="Delplace F."/>
            <person name="Trinel P.A."/>
            <person name="Masset A."/>
            <person name="Francois N."/>
            <person name="Coddeville B."/>
            <person name="Bobrowicz P."/>
            <person name="Jouault T."/>
            <person name="Guerardel Y."/>
            <person name="Wildt S."/>
            <person name="Janbon G."/>
            <person name="Poulain D."/>
        </authorList>
    </citation>
    <scope>FUNCTION</scope>
</reference>
<gene>
    <name type="primary">BMT5</name>
    <name type="synonym">IFQ4</name>
    <name type="synonym">WRY6</name>
    <name type="ordered locus">CAALFM_C201560WA</name>
    <name type="ORF">CaO19.1464</name>
    <name type="ORF">CaO19.9039</name>
</gene>
<feature type="chain" id="PRO_0000426073" description="Beta-mannosyltransferase 5">
    <location>
        <begin position="1"/>
        <end position="612"/>
    </location>
</feature>
<feature type="topological domain" description="Cytoplasmic" evidence="1">
    <location>
        <begin position="1"/>
        <end position="12"/>
    </location>
</feature>
<feature type="transmembrane region" description="Helical" evidence="1">
    <location>
        <begin position="13"/>
        <end position="33"/>
    </location>
</feature>
<feature type="topological domain" description="Extracellular" evidence="1">
    <location>
        <begin position="34"/>
        <end position="612"/>
    </location>
</feature>
<feature type="glycosylation site" description="N-linked (GlcNAc...) asparagine" evidence="1">
    <location>
        <position position="224"/>
    </location>
</feature>
<feature type="glycosylation site" description="N-linked (GlcNAc...) asparagine" evidence="1">
    <location>
        <position position="230"/>
    </location>
</feature>
<feature type="glycosylation site" description="N-linked (GlcNAc...) asparagine" evidence="1">
    <location>
        <position position="480"/>
    </location>
</feature>
<organism>
    <name type="scientific">Candida albicans (strain SC5314 / ATCC MYA-2876)</name>
    <name type="common">Yeast</name>
    <dbReference type="NCBI Taxonomy" id="237561"/>
    <lineage>
        <taxon>Eukaryota</taxon>
        <taxon>Fungi</taxon>
        <taxon>Dikarya</taxon>
        <taxon>Ascomycota</taxon>
        <taxon>Saccharomycotina</taxon>
        <taxon>Pichiomycetes</taxon>
        <taxon>Debaryomycetaceae</taxon>
        <taxon>Candida/Lodderomyces clade</taxon>
        <taxon>Candida</taxon>
    </lineage>
</organism>
<protein>
    <recommendedName>
        <fullName>Beta-mannosyltransferase 5</fullName>
        <ecNumber>2.4.1.-</ecNumber>
    </recommendedName>
    <alternativeName>
        <fullName>WRY family protein 6</fullName>
    </alternativeName>
</protein>
<evidence type="ECO:0000255" key="1"/>
<evidence type="ECO:0000269" key="2">
    <source>
    </source>
</evidence>
<evidence type="ECO:0000269" key="3">
    <source>
    </source>
</evidence>
<evidence type="ECO:0000305" key="4"/>